<sequence>MKTINIVAGGPKNLIPDLTGYTDEHTLWIGVDKGTVTLLDAGIIPVEAFGDFDSITEQERRRIEKAAPALHVYQAEKDQTDLDLALDWALEKQPDIIQIFGITGGRADHFLGNIQLLYKGVKTNIKIRLIDKQNHIQMFPPGEYDIEKDENKRYISFIPFSEDIHELTLTGFKYPLNNCHITLGSTLCISNELIHSRGTFSFAKGILIMIRSTD</sequence>
<organism>
    <name type="scientific">Bacillus subtilis (strain 168)</name>
    <dbReference type="NCBI Taxonomy" id="224308"/>
    <lineage>
        <taxon>Bacteria</taxon>
        <taxon>Bacillati</taxon>
        <taxon>Bacillota</taxon>
        <taxon>Bacilli</taxon>
        <taxon>Bacillales</taxon>
        <taxon>Bacillaceae</taxon>
        <taxon>Bacillus</taxon>
    </lineage>
</organism>
<name>THIN_BACSU</name>
<comment type="function">
    <text evidence="1">Catalyzes the ATP-dependent phosphorylation of thiamine to thiamine pyrophosphate. Is involved in thiamine salvage.</text>
</comment>
<comment type="catalytic activity">
    <reaction evidence="1">
        <text>thiamine + ATP = thiamine diphosphate + AMP + H(+)</text>
        <dbReference type="Rhea" id="RHEA:11576"/>
        <dbReference type="ChEBI" id="CHEBI:15378"/>
        <dbReference type="ChEBI" id="CHEBI:18385"/>
        <dbReference type="ChEBI" id="CHEBI:30616"/>
        <dbReference type="ChEBI" id="CHEBI:58937"/>
        <dbReference type="ChEBI" id="CHEBI:456215"/>
        <dbReference type="EC" id="2.7.6.2"/>
    </reaction>
    <physiologicalReaction direction="left-to-right" evidence="4">
        <dbReference type="Rhea" id="RHEA:11577"/>
    </physiologicalReaction>
</comment>
<comment type="biophysicochemical properties">
    <kinetics>
        <KM evidence="1">20 uM for thiamine</KM>
        <KM evidence="1">1 mM for ATP</KM>
        <text evidence="1">kcat is 0.2 sec(-1).</text>
    </kinetics>
</comment>
<comment type="pathway">
    <text evidence="1">Cofactor biosynthesis; thiamine diphosphate biosynthesis; thiamine diphosphate from thiamine: step 1/1.</text>
</comment>
<comment type="similarity">
    <text evidence="3">Belongs to the thiamine pyrophosphokinase family.</text>
</comment>
<gene>
    <name evidence="2" type="primary">thiN</name>
    <name evidence="2" type="synonym">yloS</name>
    <name type="ordered locus">BSU15800</name>
</gene>
<dbReference type="EC" id="2.7.6.2" evidence="1"/>
<dbReference type="EMBL" id="Y13937">
    <property type="protein sequence ID" value="CAA74253.1"/>
    <property type="molecule type" value="Genomic_DNA"/>
</dbReference>
<dbReference type="EMBL" id="AL009126">
    <property type="protein sequence ID" value="CAB13453.1"/>
    <property type="molecule type" value="Genomic_DNA"/>
</dbReference>
<dbReference type="PIR" id="C69879">
    <property type="entry name" value="C69879"/>
</dbReference>
<dbReference type="RefSeq" id="NP_389462.1">
    <property type="nucleotide sequence ID" value="NC_000964.3"/>
</dbReference>
<dbReference type="RefSeq" id="WP_003245470.1">
    <property type="nucleotide sequence ID" value="NZ_OZ025638.1"/>
</dbReference>
<dbReference type="PDB" id="3LM8">
    <property type="method" value="X-ray"/>
    <property type="resolution" value="2.60 A"/>
    <property type="chains" value="A/B/C/D=1-214"/>
</dbReference>
<dbReference type="PDBsum" id="3LM8"/>
<dbReference type="SMR" id="O34664"/>
<dbReference type="FunCoup" id="O34664">
    <property type="interactions" value="167"/>
</dbReference>
<dbReference type="STRING" id="224308.BSU15800"/>
<dbReference type="PaxDb" id="224308-BSU15800"/>
<dbReference type="EnsemblBacteria" id="CAB13453">
    <property type="protein sequence ID" value="CAB13453"/>
    <property type="gene ID" value="BSU_15800"/>
</dbReference>
<dbReference type="GeneID" id="937714"/>
<dbReference type="KEGG" id="bsu:BSU15800"/>
<dbReference type="PATRIC" id="fig|224308.179.peg.1720"/>
<dbReference type="eggNOG" id="COG1564">
    <property type="taxonomic scope" value="Bacteria"/>
</dbReference>
<dbReference type="InParanoid" id="O34664"/>
<dbReference type="OrthoDB" id="9804377at2"/>
<dbReference type="PhylomeDB" id="O34664"/>
<dbReference type="BioCyc" id="BSUB:BSU15800-MONOMER"/>
<dbReference type="BioCyc" id="MetaCyc:BSU15800-MONOMER"/>
<dbReference type="UniPathway" id="UPA00060">
    <property type="reaction ID" value="UER00597"/>
</dbReference>
<dbReference type="EvolutionaryTrace" id="O34664"/>
<dbReference type="Proteomes" id="UP000001570">
    <property type="component" value="Chromosome"/>
</dbReference>
<dbReference type="GO" id="GO:0005524">
    <property type="term" value="F:ATP binding"/>
    <property type="evidence" value="ECO:0007669"/>
    <property type="project" value="UniProtKB-KW"/>
</dbReference>
<dbReference type="GO" id="GO:0016301">
    <property type="term" value="F:kinase activity"/>
    <property type="evidence" value="ECO:0007669"/>
    <property type="project" value="UniProtKB-KW"/>
</dbReference>
<dbReference type="GO" id="GO:0030975">
    <property type="term" value="F:thiamine binding"/>
    <property type="evidence" value="ECO:0007669"/>
    <property type="project" value="InterPro"/>
</dbReference>
<dbReference type="GO" id="GO:0004788">
    <property type="term" value="F:thiamine diphosphokinase activity"/>
    <property type="evidence" value="ECO:0007669"/>
    <property type="project" value="UniProtKB-EC"/>
</dbReference>
<dbReference type="GO" id="GO:0009229">
    <property type="term" value="P:thiamine diphosphate biosynthetic process"/>
    <property type="evidence" value="ECO:0007669"/>
    <property type="project" value="UniProtKB-UniPathway"/>
</dbReference>
<dbReference type="GO" id="GO:0006772">
    <property type="term" value="P:thiamine metabolic process"/>
    <property type="evidence" value="ECO:0007669"/>
    <property type="project" value="InterPro"/>
</dbReference>
<dbReference type="CDD" id="cd07995">
    <property type="entry name" value="TPK"/>
    <property type="match status" value="1"/>
</dbReference>
<dbReference type="Gene3D" id="3.40.50.10240">
    <property type="entry name" value="Thiamin pyrophosphokinase, catalytic domain"/>
    <property type="match status" value="1"/>
</dbReference>
<dbReference type="InterPro" id="IPR006282">
    <property type="entry name" value="Thi_PPkinase"/>
</dbReference>
<dbReference type="InterPro" id="IPR007373">
    <property type="entry name" value="Thiamin_PyroPKinase_B1-bd"/>
</dbReference>
<dbReference type="InterPro" id="IPR053149">
    <property type="entry name" value="TPK"/>
</dbReference>
<dbReference type="InterPro" id="IPR036371">
    <property type="entry name" value="TPK_B1-bd_sf"/>
</dbReference>
<dbReference type="InterPro" id="IPR007371">
    <property type="entry name" value="TPK_catalytic"/>
</dbReference>
<dbReference type="InterPro" id="IPR036759">
    <property type="entry name" value="TPK_catalytic_sf"/>
</dbReference>
<dbReference type="NCBIfam" id="TIGR01378">
    <property type="entry name" value="thi_PPkinase"/>
    <property type="match status" value="1"/>
</dbReference>
<dbReference type="PANTHER" id="PTHR41299">
    <property type="entry name" value="THIAMINE PYROPHOSPHOKINASE"/>
    <property type="match status" value="1"/>
</dbReference>
<dbReference type="PANTHER" id="PTHR41299:SF1">
    <property type="entry name" value="THIAMINE PYROPHOSPHOKINASE"/>
    <property type="match status" value="1"/>
</dbReference>
<dbReference type="Pfam" id="PF04265">
    <property type="entry name" value="TPK_B1_binding"/>
    <property type="match status" value="1"/>
</dbReference>
<dbReference type="Pfam" id="PF04263">
    <property type="entry name" value="TPK_catalytic"/>
    <property type="match status" value="1"/>
</dbReference>
<dbReference type="SMART" id="SM00983">
    <property type="entry name" value="TPK_B1_binding"/>
    <property type="match status" value="1"/>
</dbReference>
<dbReference type="SUPFAM" id="SSF63999">
    <property type="entry name" value="Thiamin pyrophosphokinase, catalytic domain"/>
    <property type="match status" value="1"/>
</dbReference>
<dbReference type="SUPFAM" id="SSF63862">
    <property type="entry name" value="Thiamin pyrophosphokinase, substrate-binding domain"/>
    <property type="match status" value="1"/>
</dbReference>
<evidence type="ECO:0000269" key="1">
    <source>
    </source>
</evidence>
<evidence type="ECO:0000303" key="2">
    <source>
    </source>
</evidence>
<evidence type="ECO:0000305" key="3"/>
<evidence type="ECO:0000305" key="4">
    <source>
    </source>
</evidence>
<evidence type="ECO:0007829" key="5">
    <source>
        <dbReference type="PDB" id="3LM8"/>
    </source>
</evidence>
<protein>
    <recommendedName>
        <fullName evidence="2">Thiamine pyrophosphokinase</fullName>
        <shortName>TPK</shortName>
        <ecNumber evidence="1">2.7.6.2</ecNumber>
    </recommendedName>
    <alternativeName>
        <fullName>Thiamine diphosphokinase</fullName>
    </alternativeName>
</protein>
<proteinExistence type="evidence at protein level"/>
<keyword id="KW-0002">3D-structure</keyword>
<keyword id="KW-0067">ATP-binding</keyword>
<keyword id="KW-0418">Kinase</keyword>
<keyword id="KW-0547">Nucleotide-binding</keyword>
<keyword id="KW-1185">Reference proteome</keyword>
<keyword id="KW-0808">Transferase</keyword>
<accession>O34664</accession>
<accession>Q799K8</accession>
<reference key="1">
    <citation type="journal article" date="1998" name="Microbiology">
        <title>A 28 kbp segment from the spoVM region of the Bacillus subtilis 168 genome.</title>
        <authorList>
            <person name="Foulger D."/>
            <person name="Errington J."/>
        </authorList>
    </citation>
    <scope>NUCLEOTIDE SEQUENCE [GENOMIC DNA]</scope>
    <source>
        <strain>168</strain>
    </source>
</reference>
<reference key="2">
    <citation type="journal article" date="1997" name="Nature">
        <title>The complete genome sequence of the Gram-positive bacterium Bacillus subtilis.</title>
        <authorList>
            <person name="Kunst F."/>
            <person name="Ogasawara N."/>
            <person name="Moszer I."/>
            <person name="Albertini A.M."/>
            <person name="Alloni G."/>
            <person name="Azevedo V."/>
            <person name="Bertero M.G."/>
            <person name="Bessieres P."/>
            <person name="Bolotin A."/>
            <person name="Borchert S."/>
            <person name="Borriss R."/>
            <person name="Boursier L."/>
            <person name="Brans A."/>
            <person name="Braun M."/>
            <person name="Brignell S.C."/>
            <person name="Bron S."/>
            <person name="Brouillet S."/>
            <person name="Bruschi C.V."/>
            <person name="Caldwell B."/>
            <person name="Capuano V."/>
            <person name="Carter N.M."/>
            <person name="Choi S.-K."/>
            <person name="Codani J.-J."/>
            <person name="Connerton I.F."/>
            <person name="Cummings N.J."/>
            <person name="Daniel R.A."/>
            <person name="Denizot F."/>
            <person name="Devine K.M."/>
            <person name="Duesterhoeft A."/>
            <person name="Ehrlich S.D."/>
            <person name="Emmerson P.T."/>
            <person name="Entian K.-D."/>
            <person name="Errington J."/>
            <person name="Fabret C."/>
            <person name="Ferrari E."/>
            <person name="Foulger D."/>
            <person name="Fritz C."/>
            <person name="Fujita M."/>
            <person name="Fujita Y."/>
            <person name="Fuma S."/>
            <person name="Galizzi A."/>
            <person name="Galleron N."/>
            <person name="Ghim S.-Y."/>
            <person name="Glaser P."/>
            <person name="Goffeau A."/>
            <person name="Golightly E.J."/>
            <person name="Grandi G."/>
            <person name="Guiseppi G."/>
            <person name="Guy B.J."/>
            <person name="Haga K."/>
            <person name="Haiech J."/>
            <person name="Harwood C.R."/>
            <person name="Henaut A."/>
            <person name="Hilbert H."/>
            <person name="Holsappel S."/>
            <person name="Hosono S."/>
            <person name="Hullo M.-F."/>
            <person name="Itaya M."/>
            <person name="Jones L.-M."/>
            <person name="Joris B."/>
            <person name="Karamata D."/>
            <person name="Kasahara Y."/>
            <person name="Klaerr-Blanchard M."/>
            <person name="Klein C."/>
            <person name="Kobayashi Y."/>
            <person name="Koetter P."/>
            <person name="Koningstein G."/>
            <person name="Krogh S."/>
            <person name="Kumano M."/>
            <person name="Kurita K."/>
            <person name="Lapidus A."/>
            <person name="Lardinois S."/>
            <person name="Lauber J."/>
            <person name="Lazarevic V."/>
            <person name="Lee S.-M."/>
            <person name="Levine A."/>
            <person name="Liu H."/>
            <person name="Masuda S."/>
            <person name="Mauel C."/>
            <person name="Medigue C."/>
            <person name="Medina N."/>
            <person name="Mellado R.P."/>
            <person name="Mizuno M."/>
            <person name="Moestl D."/>
            <person name="Nakai S."/>
            <person name="Noback M."/>
            <person name="Noone D."/>
            <person name="O'Reilly M."/>
            <person name="Ogawa K."/>
            <person name="Ogiwara A."/>
            <person name="Oudega B."/>
            <person name="Park S.-H."/>
            <person name="Parro V."/>
            <person name="Pohl T.M."/>
            <person name="Portetelle D."/>
            <person name="Porwollik S."/>
            <person name="Prescott A.M."/>
            <person name="Presecan E."/>
            <person name="Pujic P."/>
            <person name="Purnelle B."/>
            <person name="Rapoport G."/>
            <person name="Rey M."/>
            <person name="Reynolds S."/>
            <person name="Rieger M."/>
            <person name="Rivolta C."/>
            <person name="Rocha E."/>
            <person name="Roche B."/>
            <person name="Rose M."/>
            <person name="Sadaie Y."/>
            <person name="Sato T."/>
            <person name="Scanlan E."/>
            <person name="Schleich S."/>
            <person name="Schroeter R."/>
            <person name="Scoffone F."/>
            <person name="Sekiguchi J."/>
            <person name="Sekowska A."/>
            <person name="Seror S.J."/>
            <person name="Serror P."/>
            <person name="Shin B.-S."/>
            <person name="Soldo B."/>
            <person name="Sorokin A."/>
            <person name="Tacconi E."/>
            <person name="Takagi T."/>
            <person name="Takahashi H."/>
            <person name="Takemaru K."/>
            <person name="Takeuchi M."/>
            <person name="Tamakoshi A."/>
            <person name="Tanaka T."/>
            <person name="Terpstra P."/>
            <person name="Tognoni A."/>
            <person name="Tosato V."/>
            <person name="Uchiyama S."/>
            <person name="Vandenbol M."/>
            <person name="Vannier F."/>
            <person name="Vassarotti A."/>
            <person name="Viari A."/>
            <person name="Wambutt R."/>
            <person name="Wedler E."/>
            <person name="Wedler H."/>
            <person name="Weitzenegger T."/>
            <person name="Winters P."/>
            <person name="Wipat A."/>
            <person name="Yamamoto H."/>
            <person name="Yamane K."/>
            <person name="Yasumoto K."/>
            <person name="Yata K."/>
            <person name="Yoshida K."/>
            <person name="Yoshikawa H.-F."/>
            <person name="Zumstein E."/>
            <person name="Yoshikawa H."/>
            <person name="Danchin A."/>
        </authorList>
    </citation>
    <scope>NUCLEOTIDE SEQUENCE [LARGE SCALE GENOMIC DNA]</scope>
    <source>
        <strain>168</strain>
    </source>
</reference>
<reference key="3">
    <citation type="journal article" date="2004" name="J. Bacteriol.">
        <title>Identification of the two missing bacterial genes involved in thiamine salvage: thiamine pyrophosphokinase and thiamine kinase.</title>
        <authorList>
            <person name="Melnick J."/>
            <person name="Lis E."/>
            <person name="Park J.-H."/>
            <person name="Kinsland C."/>
            <person name="Mori H."/>
            <person name="Baba T."/>
            <person name="Perkins J."/>
            <person name="Schyns G."/>
            <person name="Vassieva O."/>
            <person name="Osterman A."/>
            <person name="Begley T.P."/>
        </authorList>
    </citation>
    <scope>FUNCTION</scope>
    <scope>CATALYTIC ACTIVITY</scope>
    <scope>PATHWAY</scope>
    <scope>BIOPHYSICOCHEMICAL PROPERTIES</scope>
</reference>
<feature type="chain" id="PRO_0000072516" description="Thiamine pyrophosphokinase">
    <location>
        <begin position="1"/>
        <end position="214"/>
    </location>
</feature>
<feature type="strand" evidence="5">
    <location>
        <begin position="3"/>
        <end position="7"/>
    </location>
</feature>
<feature type="helix" evidence="5">
    <location>
        <begin position="12"/>
        <end position="14"/>
    </location>
</feature>
<feature type="helix" evidence="5">
    <location>
        <begin position="19"/>
        <end position="21"/>
    </location>
</feature>
<feature type="strand" evidence="5">
    <location>
        <begin position="26"/>
        <end position="31"/>
    </location>
</feature>
<feature type="helix" evidence="5">
    <location>
        <begin position="33"/>
        <end position="41"/>
    </location>
</feature>
<feature type="strand" evidence="5">
    <location>
        <begin position="46"/>
        <end position="50"/>
    </location>
</feature>
<feature type="helix" evidence="5">
    <location>
        <begin position="57"/>
        <end position="66"/>
    </location>
</feature>
<feature type="strand" evidence="5">
    <location>
        <begin position="71"/>
        <end position="73"/>
    </location>
</feature>
<feature type="strand" evidence="5">
    <location>
        <begin position="77"/>
        <end position="79"/>
    </location>
</feature>
<feature type="helix" evidence="5">
    <location>
        <begin position="81"/>
        <end position="92"/>
    </location>
</feature>
<feature type="strand" evidence="5">
    <location>
        <begin position="95"/>
        <end position="101"/>
    </location>
</feature>
<feature type="helix" evidence="5">
    <location>
        <begin position="107"/>
        <end position="122"/>
    </location>
</feature>
<feature type="strand" evidence="5">
    <location>
        <begin position="126"/>
        <end position="131"/>
    </location>
</feature>
<feature type="strand" evidence="5">
    <location>
        <begin position="134"/>
        <end position="139"/>
    </location>
</feature>
<feature type="strand" evidence="5">
    <location>
        <begin position="141"/>
        <end position="147"/>
    </location>
</feature>
<feature type="strand" evidence="5">
    <location>
        <begin position="154"/>
        <end position="159"/>
    </location>
</feature>
<feature type="strand" evidence="5">
    <location>
        <begin position="164"/>
        <end position="174"/>
    </location>
</feature>
<feature type="strand" evidence="5">
    <location>
        <begin position="176"/>
        <end position="181"/>
    </location>
</feature>
<feature type="strand" evidence="5">
    <location>
        <begin position="189"/>
        <end position="191"/>
    </location>
</feature>
<feature type="strand" evidence="5">
    <location>
        <begin position="193"/>
        <end position="205"/>
    </location>
</feature>
<feature type="strand" evidence="5">
    <location>
        <begin position="207"/>
        <end position="212"/>
    </location>
</feature>